<comment type="catalytic activity">
    <reaction>
        <text>2 oxidized [2Fe-2S]-[ferredoxin] + 2 L-glutamate = L-glutamine + 2 reduced [2Fe-2S]-[ferredoxin] + 2-oxoglutarate + 2 H(+)</text>
        <dbReference type="Rhea" id="RHEA:12128"/>
        <dbReference type="Rhea" id="RHEA-COMP:10000"/>
        <dbReference type="Rhea" id="RHEA-COMP:10001"/>
        <dbReference type="ChEBI" id="CHEBI:15378"/>
        <dbReference type="ChEBI" id="CHEBI:16810"/>
        <dbReference type="ChEBI" id="CHEBI:29985"/>
        <dbReference type="ChEBI" id="CHEBI:33737"/>
        <dbReference type="ChEBI" id="CHEBI:33738"/>
        <dbReference type="ChEBI" id="CHEBI:58359"/>
        <dbReference type="EC" id="1.4.7.1"/>
    </reaction>
</comment>
<comment type="cofactor">
    <cofactor>
        <name>[3Fe-4S] cluster</name>
        <dbReference type="ChEBI" id="CHEBI:21137"/>
    </cofactor>
    <text>Binds 1 [3Fe-4S] cluster.</text>
</comment>
<comment type="cofactor">
    <cofactor>
        <name>FAD</name>
        <dbReference type="ChEBI" id="CHEBI:57692"/>
    </cofactor>
</comment>
<comment type="cofactor">
    <cofactor>
        <name>FMN</name>
        <dbReference type="ChEBI" id="CHEBI:58210"/>
    </cofactor>
</comment>
<comment type="pathway">
    <text>Amino-acid biosynthesis; L-glutamate biosynthesis via GLT pathway; L-glutamate from 2-oxoglutarate and L-glutamine (ferredoxin route): step 1/1.</text>
</comment>
<comment type="pathway">
    <text>Energy metabolism; nitrogen metabolism.</text>
</comment>
<comment type="similarity">
    <text evidence="4">Belongs to the glutamate synthase family.</text>
</comment>
<organism>
    <name type="scientific">Synechocystis sp. (strain ATCC 27184 / PCC 6803 / Kazusa)</name>
    <dbReference type="NCBI Taxonomy" id="1111708"/>
    <lineage>
        <taxon>Bacteria</taxon>
        <taxon>Bacillati</taxon>
        <taxon>Cyanobacteriota</taxon>
        <taxon>Cyanophyceae</taxon>
        <taxon>Synechococcales</taxon>
        <taxon>Merismopediaceae</taxon>
        <taxon>Synechocystis</taxon>
    </lineage>
</organism>
<name>GLTS_SYNY3</name>
<keyword id="KW-0002">3D-structure</keyword>
<keyword id="KW-0003">3Fe-4S</keyword>
<keyword id="KW-0028">Amino-acid biosynthesis</keyword>
<keyword id="KW-0274">FAD</keyword>
<keyword id="KW-0285">Flavoprotein</keyword>
<keyword id="KW-0288">FMN</keyword>
<keyword id="KW-0314">Glutamate biosynthesis</keyword>
<keyword id="KW-0315">Glutamine amidotransferase</keyword>
<keyword id="KW-0408">Iron</keyword>
<keyword id="KW-0411">Iron-sulfur</keyword>
<keyword id="KW-0479">Metal-binding</keyword>
<keyword id="KW-0560">Oxidoreductase</keyword>
<keyword id="KW-1185">Reference proteome</keyword>
<accession>P55038</accession>
<accession>Q59980</accession>
<proteinExistence type="evidence at protein level"/>
<evidence type="ECO:0000250" key="1"/>
<evidence type="ECO:0000255" key="2">
    <source>
        <dbReference type="PROSITE-ProRule" id="PRU00609"/>
    </source>
</evidence>
<evidence type="ECO:0000256" key="3">
    <source>
        <dbReference type="SAM" id="MobiDB-lite"/>
    </source>
</evidence>
<evidence type="ECO:0000305" key="4"/>
<evidence type="ECO:0007829" key="5">
    <source>
        <dbReference type="PDB" id="1LLW"/>
    </source>
</evidence>
<evidence type="ECO:0007829" key="6">
    <source>
        <dbReference type="PDB" id="1LM1"/>
    </source>
</evidence>
<evidence type="ECO:0007829" key="7">
    <source>
        <dbReference type="PDB" id="1OFD"/>
    </source>
</evidence>
<evidence type="ECO:0007829" key="8">
    <source>
        <dbReference type="PDB" id="1OFE"/>
    </source>
</evidence>
<gene>
    <name type="primary">gltS</name>
    <name type="ordered locus">sll1499</name>
</gene>
<reference key="1">
    <citation type="journal article" date="1995" name="Plant Mol. Biol.">
        <title>Existence of two ferredoxin-glutamate synthases in the cyanobacterium Synechocystis sp. PCC 6803. Isolation and insertional inactivation of gltB and gltS genes.</title>
        <authorList>
            <person name="Navarro F."/>
            <person name="Chavez S."/>
            <person name="Candau P."/>
            <person name="Florencio F.J."/>
        </authorList>
    </citation>
    <scope>NUCLEOTIDE SEQUENCE [GENOMIC DNA]</scope>
</reference>
<reference key="2">
    <citation type="submission" date="1995-12" db="EMBL/GenBank/DDBJ databases">
        <authorList>
            <person name="Terauchi K."/>
            <person name="Ikeuchi M."/>
            <person name="Ohmori M."/>
        </authorList>
    </citation>
    <scope>NUCLEOTIDE SEQUENCE [GENOMIC DNA]</scope>
</reference>
<reference key="3">
    <citation type="journal article" date="1996" name="DNA Res.">
        <title>Sequence analysis of the genome of the unicellular cyanobacterium Synechocystis sp. strain PCC6803. II. Sequence determination of the entire genome and assignment of potential protein-coding regions.</title>
        <authorList>
            <person name="Kaneko T."/>
            <person name="Sato S."/>
            <person name="Kotani H."/>
            <person name="Tanaka A."/>
            <person name="Asamizu E."/>
            <person name="Nakamura Y."/>
            <person name="Miyajima N."/>
            <person name="Hirosawa M."/>
            <person name="Sugiura M."/>
            <person name="Sasamoto S."/>
            <person name="Kimura T."/>
            <person name="Hosouchi T."/>
            <person name="Matsuno A."/>
            <person name="Muraki A."/>
            <person name="Nakazaki N."/>
            <person name="Naruo K."/>
            <person name="Okumura S."/>
            <person name="Shimpo S."/>
            <person name="Takeuchi C."/>
            <person name="Wada T."/>
            <person name="Watanabe A."/>
            <person name="Yamada M."/>
            <person name="Yasuda M."/>
            <person name="Tabata S."/>
        </authorList>
    </citation>
    <scope>NUCLEOTIDE SEQUENCE [LARGE SCALE GENOMIC DNA]</scope>
    <source>
        <strain>ATCC 27184 / PCC 6803 / Kazusa</strain>
    </source>
</reference>
<dbReference type="EC" id="1.4.7.1"/>
<dbReference type="EMBL" id="X92480">
    <property type="protein sequence ID" value="CAA63218.1"/>
    <property type="molecule type" value="Genomic_DNA"/>
</dbReference>
<dbReference type="EMBL" id="D78371">
    <property type="protein sequence ID" value="BAA11379.1"/>
    <property type="molecule type" value="Genomic_DNA"/>
</dbReference>
<dbReference type="EMBL" id="BA000022">
    <property type="protein sequence ID" value="BAA18693.1"/>
    <property type="molecule type" value="Genomic_DNA"/>
</dbReference>
<dbReference type="PIR" id="S76781">
    <property type="entry name" value="S76781"/>
</dbReference>
<dbReference type="PDB" id="1LLW">
    <property type="method" value="X-ray"/>
    <property type="resolution" value="2.70 A"/>
    <property type="chains" value="A=37-1556"/>
</dbReference>
<dbReference type="PDB" id="1LLZ">
    <property type="method" value="X-ray"/>
    <property type="resolution" value="3.00 A"/>
    <property type="chains" value="A=37-1556"/>
</dbReference>
<dbReference type="PDB" id="1LM1">
    <property type="method" value="X-ray"/>
    <property type="resolution" value="2.80 A"/>
    <property type="chains" value="A=37-1556"/>
</dbReference>
<dbReference type="PDB" id="1OFD">
    <property type="method" value="X-ray"/>
    <property type="resolution" value="2.00 A"/>
    <property type="chains" value="A/B=37-1556"/>
</dbReference>
<dbReference type="PDB" id="1OFE">
    <property type="method" value="X-ray"/>
    <property type="resolution" value="2.45 A"/>
    <property type="chains" value="A/B=37-1556"/>
</dbReference>
<dbReference type="PDBsum" id="1LLW"/>
<dbReference type="PDBsum" id="1LLZ"/>
<dbReference type="PDBsum" id="1LM1"/>
<dbReference type="PDBsum" id="1OFD"/>
<dbReference type="PDBsum" id="1OFE"/>
<dbReference type="SASBDB" id="P55038"/>
<dbReference type="SMR" id="P55038"/>
<dbReference type="IntAct" id="P55038">
    <property type="interactions" value="4"/>
</dbReference>
<dbReference type="STRING" id="1148.gene:10500464"/>
<dbReference type="DrugBank" id="DB03247">
    <property type="generic name" value="Flavin mononucleotide"/>
</dbReference>
<dbReference type="MEROPS" id="C44.003"/>
<dbReference type="PaxDb" id="1148-1653782"/>
<dbReference type="EnsemblBacteria" id="BAA18693">
    <property type="protein sequence ID" value="BAA18693"/>
    <property type="gene ID" value="BAA18693"/>
</dbReference>
<dbReference type="KEGG" id="syn:sll1499"/>
<dbReference type="eggNOG" id="COG0067">
    <property type="taxonomic scope" value="Bacteria"/>
</dbReference>
<dbReference type="eggNOG" id="COG0069">
    <property type="taxonomic scope" value="Bacteria"/>
</dbReference>
<dbReference type="eggNOG" id="COG0070">
    <property type="taxonomic scope" value="Bacteria"/>
</dbReference>
<dbReference type="InParanoid" id="P55038"/>
<dbReference type="PhylomeDB" id="P55038"/>
<dbReference type="BioCyc" id="MetaCyc:SGL_RS17380-MONOMER"/>
<dbReference type="BRENDA" id="1.4.7.1">
    <property type="organism ID" value="382"/>
</dbReference>
<dbReference type="UniPathway" id="UPA00045"/>
<dbReference type="UniPathway" id="UPA00634">
    <property type="reaction ID" value="UER00691"/>
</dbReference>
<dbReference type="EvolutionaryTrace" id="P55038"/>
<dbReference type="Proteomes" id="UP000001425">
    <property type="component" value="Chromosome"/>
</dbReference>
<dbReference type="GO" id="GO:0051538">
    <property type="term" value="F:3 iron, 4 sulfur cluster binding"/>
    <property type="evidence" value="ECO:0007669"/>
    <property type="project" value="UniProtKB-KW"/>
</dbReference>
<dbReference type="GO" id="GO:0016041">
    <property type="term" value="F:glutamate synthase (ferredoxin) activity"/>
    <property type="evidence" value="ECO:0007669"/>
    <property type="project" value="UniProtKB-EC"/>
</dbReference>
<dbReference type="GO" id="GO:0015930">
    <property type="term" value="F:glutamate synthase activity"/>
    <property type="evidence" value="ECO:0000318"/>
    <property type="project" value="GO_Central"/>
</dbReference>
<dbReference type="GO" id="GO:0046872">
    <property type="term" value="F:metal ion binding"/>
    <property type="evidence" value="ECO:0007669"/>
    <property type="project" value="UniProtKB-KW"/>
</dbReference>
<dbReference type="GO" id="GO:0019676">
    <property type="term" value="P:ammonia assimilation cycle"/>
    <property type="evidence" value="ECO:0000318"/>
    <property type="project" value="GO_Central"/>
</dbReference>
<dbReference type="GO" id="GO:0006537">
    <property type="term" value="P:glutamate biosynthetic process"/>
    <property type="evidence" value="ECO:0000318"/>
    <property type="project" value="GO_Central"/>
</dbReference>
<dbReference type="GO" id="GO:0097054">
    <property type="term" value="P:L-glutamate biosynthetic process"/>
    <property type="evidence" value="ECO:0007669"/>
    <property type="project" value="UniProtKB-UniPathway"/>
</dbReference>
<dbReference type="CDD" id="cd00982">
    <property type="entry name" value="gltB_C"/>
    <property type="match status" value="1"/>
</dbReference>
<dbReference type="CDD" id="cd00713">
    <property type="entry name" value="GltS"/>
    <property type="match status" value="1"/>
</dbReference>
<dbReference type="CDD" id="cd02808">
    <property type="entry name" value="GltS_FMN"/>
    <property type="match status" value="1"/>
</dbReference>
<dbReference type="FunFam" id="2.160.20.60:FF:000003">
    <property type="entry name" value="Ferredoxin-dependent glutamate synthase, chloroplastic"/>
    <property type="match status" value="1"/>
</dbReference>
<dbReference type="FunFam" id="3.20.20.70:FF:000084">
    <property type="entry name" value="Ferredoxin-dependent glutamate synthase, chloroplastic"/>
    <property type="match status" value="1"/>
</dbReference>
<dbReference type="FunFam" id="3.20.20.70:FF:000127">
    <property type="entry name" value="Ferredoxin-dependent glutamate synthase, chloroplastic"/>
    <property type="match status" value="1"/>
</dbReference>
<dbReference type="FunFam" id="3.60.20.10:FF:000001">
    <property type="entry name" value="Glutamate synthase, large subunit"/>
    <property type="match status" value="1"/>
</dbReference>
<dbReference type="Gene3D" id="3.20.20.70">
    <property type="entry name" value="Aldolase class I"/>
    <property type="match status" value="2"/>
</dbReference>
<dbReference type="Gene3D" id="2.160.20.60">
    <property type="entry name" value="Glutamate synthase, alpha subunit, C-terminal domain"/>
    <property type="match status" value="1"/>
</dbReference>
<dbReference type="Gene3D" id="3.60.20.10">
    <property type="entry name" value="Glutamine Phosphoribosylpyrophosphate, subunit 1, domain 1"/>
    <property type="match status" value="1"/>
</dbReference>
<dbReference type="InterPro" id="IPR013785">
    <property type="entry name" value="Aldolase_TIM"/>
</dbReference>
<dbReference type="InterPro" id="IPR050711">
    <property type="entry name" value="ET-N_metabolism_enzyme"/>
</dbReference>
<dbReference type="InterPro" id="IPR017932">
    <property type="entry name" value="GATase_2_dom"/>
</dbReference>
<dbReference type="InterPro" id="IPR002489">
    <property type="entry name" value="Glu_synth_asu_C"/>
</dbReference>
<dbReference type="InterPro" id="IPR036485">
    <property type="entry name" value="Glu_synth_asu_C_sf"/>
</dbReference>
<dbReference type="InterPro" id="IPR006982">
    <property type="entry name" value="Glu_synth_centr_N"/>
</dbReference>
<dbReference type="InterPro" id="IPR002932">
    <property type="entry name" value="Glu_synthdom"/>
</dbReference>
<dbReference type="InterPro" id="IPR029055">
    <property type="entry name" value="Ntn_hydrolases_N"/>
</dbReference>
<dbReference type="NCBIfam" id="NF008730">
    <property type="entry name" value="PRK11750.1"/>
    <property type="match status" value="1"/>
</dbReference>
<dbReference type="PANTHER" id="PTHR11938">
    <property type="entry name" value="FAD NADPH DEHYDROGENASE/OXIDOREDUCTASE"/>
    <property type="match status" value="1"/>
</dbReference>
<dbReference type="PANTHER" id="PTHR11938:SF133">
    <property type="entry name" value="GLUTAMATE SYNTHASE (NADH)"/>
    <property type="match status" value="1"/>
</dbReference>
<dbReference type="Pfam" id="PF00310">
    <property type="entry name" value="GATase_2"/>
    <property type="match status" value="1"/>
</dbReference>
<dbReference type="Pfam" id="PF04898">
    <property type="entry name" value="Glu_syn_central"/>
    <property type="match status" value="1"/>
</dbReference>
<dbReference type="Pfam" id="PF01645">
    <property type="entry name" value="Glu_synthase"/>
    <property type="match status" value="1"/>
</dbReference>
<dbReference type="Pfam" id="PF01493">
    <property type="entry name" value="GXGXG"/>
    <property type="match status" value="1"/>
</dbReference>
<dbReference type="SUPFAM" id="SSF69336">
    <property type="entry name" value="Alpha subunit of glutamate synthase, C-terminal domain"/>
    <property type="match status" value="1"/>
</dbReference>
<dbReference type="SUPFAM" id="SSF51395">
    <property type="entry name" value="FMN-linked oxidoreductases"/>
    <property type="match status" value="1"/>
</dbReference>
<dbReference type="SUPFAM" id="SSF56235">
    <property type="entry name" value="N-terminal nucleophile aminohydrolases (Ntn hydrolases)"/>
    <property type="match status" value="1"/>
</dbReference>
<dbReference type="PROSITE" id="PS51278">
    <property type="entry name" value="GATASE_TYPE_2"/>
    <property type="match status" value="1"/>
</dbReference>
<sequence>MSFQYPLLAPMTNSSVATNSNQPFLGQPWLVEERDACGVGFIANLRGKPDHTLVEQALKALGCMEHRGGCSADNDSGDGAGVMTAIPRELLAQWFNTRNLPMPDGDRLGVGMVFLPQEPSAREVARAYVEEVVRLEKLTVLGWREVPVNSDVLGIQAKNNQPHIEQILVTCPEGCAGDELDRRLYIARSIIGKKLAEDFYVCSFSCRTIVYKGMVRSIILGEFYLDLKNPGYTSNFAVYHRRFSTNTMPKWPLAQPMRLLGHNGEINTLLGNINWMAAREKELEVSGWTKAELEALTPIVNQANSDSYNLDSALELLVRTGRSPLEAAMILVPEAYKNQPALKDYPEISDFHDYYSGLQEPWDGPALLVFSDGKIVGAGLDRNGLRPARYCITKDDYIVLGSEAGVVDLPEVDIVEKGRLAPGQMIAVDLAEQKILKNYQIKQQAAQKYPYGEWIKIQRQTVASDSFAEKTLFNDAQTVLQQQAAFGYTAEDVEMVVVPMASQGKEPTFCMGDDTPLAVLSHKPRLLYDYFKQRFAQVTNPPIDPLRENLVMSLAMFLGKRGNLLEPKAESARTIKLRSPLVNEVELQAIKTGQLQVAEVSTLYDLDGVNSLETALDNLVKTAIATVQAGAEILVLTDRPNGAILTENQSFIPPLLAVGAVHHHLIRAGLRLKASLIVDTAQCWSTHHFACLVGYGASAICPYLALESVRQWWLDEKTQKLMENGRLDRIDLPTALKNYRQSVEAGLFKILSKMGISLLASYHGAQIFEAIGLGAELVEYAFAGTTSRVGGLTIADVAGEVMVFHGMAFPEMAKKLENFGFVNYRPGGEYHMNSPEMSKSLHKAVAAYKVGGNGNNGEAYDHYELYRQYLKDRPVTALRDLLDFNADQPAISLEEVESVESIVKRFCTGGMSLGALSREAHETLAIAMNRLGAKSNSGEGGEDVVRYLTLDDVDSEGNSPTLPHLHGLQNGDTANSAIKQIASGRFGVTPEYLMSGKQLEIKMAQGAKPGEGGQLPGKKVSEYIAMLRRSKPGVTLISPPPHHDIYSIEDLAQLIYDLHQINPEAQVSVKLVAEIGIGTIAAGVAKANADIIQISGHDGGTGASPLSSIKHAGSPWELGVTEVHRVLMENQLRDRVLLRADGGLKTGWDVVMAALMGAEEYGFGSIAMIAEGCIMARVCHTNNCPVGVATQQERLRQRFKGVPGQVVNFFYFIAEEVRSLLAHLGYRSLDDIIGRTDLLKVRSDVQLSKTQNLTLDCLLNLPDTKQNRQWLNHEPVHSNGPVLDDDILADPDIQEAINHQTTATKTYRLVNTDRTVGTRLSGAIAKKYGNNGFEGNITLNFQGAAGQSFGAFNLDGMTLHLQGEANDYVGKGMNGGEIVIVPHPQASFAPEDNVIIGNTCLYGATGGNLYANGRAGERFAVRNSVGKAVIEGAGDHCCEYMTGGVIVVLGPVGRNVGAGMTGGLAYFLDEVGDLPEKINPEIITLQRITASKGEEQLKSLITAHVEHTGSPKGKAILANWSDYLGKFWQAVPPSEKDSPEANGDVSLTGEKTLTSV</sequence>
<feature type="chain" id="PRO_0000170794" description="Ferredoxin-dependent glutamate synthase 2">
    <location>
        <begin position="1"/>
        <end position="1556"/>
    </location>
</feature>
<feature type="domain" description="Glutamine amidotransferase type-2" evidence="2">
    <location>
        <begin position="37"/>
        <end position="431"/>
    </location>
</feature>
<feature type="region of interest" description="Disordered" evidence="3">
    <location>
        <begin position="1533"/>
        <end position="1556"/>
    </location>
</feature>
<feature type="active site" description="For GATase activity" evidence="1">
    <location>
        <position position="37"/>
    </location>
</feature>
<feature type="binding site" evidence="1">
    <location>
        <position position="1173"/>
    </location>
    <ligand>
        <name>[3Fe-4S] cluster</name>
        <dbReference type="ChEBI" id="CHEBI:21137"/>
    </ligand>
</feature>
<feature type="binding site" evidence="1">
    <location>
        <position position="1179"/>
    </location>
    <ligand>
        <name>[3Fe-4S] cluster</name>
        <dbReference type="ChEBI" id="CHEBI:21137"/>
    </ligand>
</feature>
<feature type="binding site" evidence="1">
    <location>
        <position position="1184"/>
    </location>
    <ligand>
        <name>[3Fe-4S] cluster</name>
        <dbReference type="ChEBI" id="CHEBI:21137"/>
    </ligand>
</feature>
<feature type="sequence conflict" description="In Ref. 1; CAA63218." evidence="4" ref="1">
    <original>E</original>
    <variation>Q</variation>
    <location>
        <position position="491"/>
    </location>
</feature>
<feature type="sequence conflict" description="In Ref. 1; CAA63218." evidence="4" ref="1">
    <original>ESA</original>
    <variation>NPR</variation>
    <location>
        <begin position="570"/>
        <end position="572"/>
    </location>
</feature>
<feature type="sequence conflict" description="In Ref. 1; CAA63218." evidence="4" ref="1">
    <original>GAILTENQS</original>
    <variation>RRNIGLRIKV</variation>
    <location>
        <begin position="642"/>
        <end position="650"/>
    </location>
</feature>
<feature type="sequence conflict" description="In Ref. 1; CAA63218." evidence="4" ref="1">
    <original>G</original>
    <variation>E</variation>
    <location>
        <position position="659"/>
    </location>
</feature>
<feature type="sequence conflict" description="In Ref. 1; CAA63218." evidence="4" ref="1">
    <original>GG</original>
    <variation>PP</variation>
    <location>
        <begin position="940"/>
        <end position="941"/>
    </location>
</feature>
<feature type="sequence conflict" description="In Ref. 1; CAA63218." evidence="4" ref="1">
    <original>H</original>
    <variation>L</variation>
    <location>
        <position position="1059"/>
    </location>
</feature>
<feature type="sequence conflict" description="In Ref. 1; CAA63218." evidence="4" ref="1">
    <original>E</original>
    <variation>RK</variation>
    <location>
        <position position="1295"/>
    </location>
</feature>
<feature type="sequence conflict" description="In Ref. 1; CAA63218." evidence="4" ref="1">
    <original>V</original>
    <variation>D</variation>
    <location>
        <position position="1310"/>
    </location>
</feature>
<feature type="sequence conflict" description="In Ref. 1; CAA63218." evidence="4" ref="1">
    <original>A</original>
    <variation>S</variation>
    <location>
        <position position="1323"/>
    </location>
</feature>
<feature type="sequence conflict" description="In Ref. 1; CAA63218." evidence="4" ref="1">
    <location>
        <position position="1531"/>
    </location>
</feature>
<feature type="strand" evidence="7">
    <location>
        <begin position="38"/>
        <end position="43"/>
    </location>
</feature>
<feature type="strand" evidence="7">
    <location>
        <begin position="45"/>
        <end position="47"/>
    </location>
</feature>
<feature type="helix" evidence="7">
    <location>
        <begin position="52"/>
        <end position="63"/>
    </location>
</feature>
<feature type="helix" evidence="7">
    <location>
        <begin position="64"/>
        <end position="67"/>
    </location>
</feature>
<feature type="strand" evidence="7">
    <location>
        <begin position="74"/>
        <end position="78"/>
    </location>
</feature>
<feature type="strand" evidence="7">
    <location>
        <begin position="80"/>
        <end position="85"/>
    </location>
</feature>
<feature type="helix" evidence="7">
    <location>
        <begin position="88"/>
        <end position="97"/>
    </location>
</feature>
<feature type="helix" evidence="7">
    <location>
        <begin position="105"/>
        <end position="107"/>
    </location>
</feature>
<feature type="strand" evidence="7">
    <location>
        <begin position="109"/>
        <end position="115"/>
    </location>
</feature>
<feature type="helix" evidence="7">
    <location>
        <begin position="119"/>
        <end position="135"/>
    </location>
</feature>
<feature type="strand" evidence="7">
    <location>
        <begin position="139"/>
        <end position="145"/>
    </location>
</feature>
<feature type="helix" evidence="7">
    <location>
        <begin position="150"/>
        <end position="152"/>
    </location>
</feature>
<feature type="helix" evidence="7">
    <location>
        <begin position="155"/>
        <end position="160"/>
    </location>
</feature>
<feature type="strand" evidence="7">
    <location>
        <begin position="163"/>
        <end position="170"/>
    </location>
</feature>
<feature type="helix" evidence="7">
    <location>
        <begin position="177"/>
        <end position="191"/>
    </location>
</feature>
<feature type="helix" evidence="7">
    <location>
        <begin position="192"/>
        <end position="194"/>
    </location>
</feature>
<feature type="strand" evidence="7">
    <location>
        <begin position="199"/>
        <end position="215"/>
    </location>
</feature>
<feature type="helix" evidence="7">
    <location>
        <begin position="217"/>
        <end position="219"/>
    </location>
</feature>
<feature type="helix" evidence="7">
    <location>
        <begin position="220"/>
        <end position="223"/>
    </location>
</feature>
<feature type="helix" evidence="7">
    <location>
        <begin position="225"/>
        <end position="228"/>
    </location>
</feature>
<feature type="strand" evidence="7">
    <location>
        <begin position="234"/>
        <end position="241"/>
    </location>
</feature>
<feature type="strand" evidence="7">
    <location>
        <begin position="245"/>
        <end position="247"/>
    </location>
</feature>
<feature type="helix" evidence="7">
    <location>
        <begin position="251"/>
        <end position="253"/>
    </location>
</feature>
<feature type="strand" evidence="5">
    <location>
        <begin position="254"/>
        <end position="256"/>
    </location>
</feature>
<feature type="strand" evidence="7">
    <location>
        <begin position="258"/>
        <end position="264"/>
    </location>
</feature>
<feature type="helix" evidence="7">
    <location>
        <begin position="269"/>
        <end position="279"/>
    </location>
</feature>
<feature type="helix" evidence="7">
    <location>
        <begin position="280"/>
        <end position="282"/>
    </location>
</feature>
<feature type="helix" evidence="7">
    <location>
        <begin position="290"/>
        <end position="296"/>
    </location>
</feature>
<feature type="helix" evidence="7">
    <location>
        <begin position="306"/>
        <end position="319"/>
    </location>
</feature>
<feature type="helix" evidence="7">
    <location>
        <begin position="324"/>
        <end position="331"/>
    </location>
</feature>
<feature type="helix" evidence="7">
    <location>
        <begin position="340"/>
        <end position="342"/>
    </location>
</feature>
<feature type="helix" evidence="7">
    <location>
        <begin position="346"/>
        <end position="355"/>
    </location>
</feature>
<feature type="turn" evidence="7">
    <location>
        <begin position="356"/>
        <end position="358"/>
    </location>
</feature>
<feature type="strand" evidence="7">
    <location>
        <begin position="364"/>
        <end position="371"/>
    </location>
</feature>
<feature type="strand" evidence="7">
    <location>
        <begin position="373"/>
        <end position="380"/>
    </location>
</feature>
<feature type="strand" evidence="7">
    <location>
        <begin position="389"/>
        <end position="393"/>
    </location>
</feature>
<feature type="strand" evidence="7">
    <location>
        <begin position="398"/>
        <end position="403"/>
    </location>
</feature>
<feature type="helix" evidence="7">
    <location>
        <begin position="411"/>
        <end position="413"/>
    </location>
</feature>
<feature type="strand" evidence="7">
    <location>
        <begin position="414"/>
        <end position="419"/>
    </location>
</feature>
<feature type="strand" evidence="7">
    <location>
        <begin position="425"/>
        <end position="429"/>
    </location>
</feature>
<feature type="turn" evidence="7">
    <location>
        <begin position="430"/>
        <end position="433"/>
    </location>
</feature>
<feature type="strand" evidence="7">
    <location>
        <begin position="434"/>
        <end position="436"/>
    </location>
</feature>
<feature type="helix" evidence="7">
    <location>
        <begin position="438"/>
        <end position="446"/>
    </location>
</feature>
<feature type="helix" evidence="7">
    <location>
        <begin position="451"/>
        <end position="458"/>
    </location>
</feature>
<feature type="strand" evidence="7">
    <location>
        <begin position="459"/>
        <end position="462"/>
    </location>
</feature>
<feature type="helix" evidence="7">
    <location>
        <begin position="476"/>
        <end position="485"/>
    </location>
</feature>
<feature type="helix" evidence="7">
    <location>
        <begin position="490"/>
        <end position="495"/>
    </location>
</feature>
<feature type="helix" evidence="7">
    <location>
        <begin position="497"/>
        <end position="503"/>
    </location>
</feature>
<feature type="turn" evidence="7">
    <location>
        <begin position="518"/>
        <end position="520"/>
    </location>
</feature>
<feature type="helix" evidence="7">
    <location>
        <begin position="527"/>
        <end position="530"/>
    </location>
</feature>
<feature type="strand" evidence="7">
    <location>
        <begin position="531"/>
        <end position="533"/>
    </location>
</feature>
<feature type="strand" evidence="7">
    <location>
        <begin position="538"/>
        <end position="540"/>
    </location>
</feature>
<feature type="turn" evidence="7">
    <location>
        <begin position="545"/>
        <end position="548"/>
    </location>
</feature>
<feature type="helix" evidence="7">
    <location>
        <begin position="549"/>
        <end position="551"/>
    </location>
</feature>
<feature type="strand" evidence="7">
    <location>
        <begin position="556"/>
        <end position="559"/>
    </location>
</feature>
<feature type="strand" evidence="7">
    <location>
        <begin position="564"/>
        <end position="566"/>
    </location>
</feature>
<feature type="helix" evidence="7">
    <location>
        <begin position="569"/>
        <end position="572"/>
    </location>
</feature>
<feature type="strand" evidence="7">
    <location>
        <begin position="574"/>
        <end position="578"/>
    </location>
</feature>
<feature type="helix" evidence="7">
    <location>
        <begin position="584"/>
        <end position="592"/>
    </location>
</feature>
<feature type="strand" evidence="7">
    <location>
        <begin position="593"/>
        <end position="595"/>
    </location>
</feature>
<feature type="strand" evidence="7">
    <location>
        <begin position="597"/>
        <end position="601"/>
    </location>
</feature>
<feature type="strand" evidence="7">
    <location>
        <begin position="603"/>
        <end position="605"/>
    </location>
</feature>
<feature type="strand" evidence="7">
    <location>
        <begin position="607"/>
        <end position="609"/>
    </location>
</feature>
<feature type="helix" evidence="7">
    <location>
        <begin position="612"/>
        <end position="628"/>
    </location>
</feature>
<feature type="strand" evidence="7">
    <location>
        <begin position="632"/>
        <end position="639"/>
    </location>
</feature>
<feature type="helix" evidence="7">
    <location>
        <begin position="640"/>
        <end position="642"/>
    </location>
</feature>
<feature type="strand" evidence="5">
    <location>
        <begin position="646"/>
        <end position="648"/>
    </location>
</feature>
<feature type="strand" evidence="7">
    <location>
        <begin position="649"/>
        <end position="651"/>
    </location>
</feature>
<feature type="helix" evidence="7">
    <location>
        <begin position="654"/>
        <end position="667"/>
    </location>
</feature>
<feature type="helix" evidence="7">
    <location>
        <begin position="671"/>
        <end position="673"/>
    </location>
</feature>
<feature type="strand" evidence="7">
    <location>
        <begin position="675"/>
        <end position="679"/>
    </location>
</feature>
<feature type="helix" evidence="7">
    <location>
        <begin position="686"/>
        <end position="694"/>
    </location>
</feature>
<feature type="strand" evidence="7">
    <location>
        <begin position="698"/>
        <end position="701"/>
    </location>
</feature>
<feature type="helix" evidence="7">
    <location>
        <begin position="703"/>
        <end position="713"/>
    </location>
</feature>
<feature type="helix" evidence="7">
    <location>
        <begin position="716"/>
        <end position="722"/>
    </location>
</feature>
<feature type="turn" evidence="5">
    <location>
        <begin position="723"/>
        <end position="725"/>
    </location>
</feature>
<feature type="helix" evidence="7">
    <location>
        <begin position="732"/>
        <end position="753"/>
    </location>
</feature>
<feature type="helix" evidence="7">
    <location>
        <begin position="759"/>
        <end position="763"/>
    </location>
</feature>
<feature type="strand" evidence="7">
    <location>
        <begin position="768"/>
        <end position="773"/>
    </location>
</feature>
<feature type="helix" evidence="7">
    <location>
        <begin position="775"/>
        <end position="781"/>
    </location>
</feature>
<feature type="helix" evidence="7">
    <location>
        <begin position="794"/>
        <end position="808"/>
    </location>
</feature>
<feature type="strand" evidence="5">
    <location>
        <begin position="809"/>
        <end position="811"/>
    </location>
</feature>
<feature type="strand" evidence="7">
    <location>
        <begin position="820"/>
        <end position="823"/>
    </location>
</feature>
<feature type="strand" evidence="8">
    <location>
        <begin position="826"/>
        <end position="828"/>
    </location>
</feature>
<feature type="helix" evidence="7">
    <location>
        <begin position="835"/>
        <end position="847"/>
    </location>
</feature>
<feature type="helix" evidence="7">
    <location>
        <begin position="862"/>
        <end position="871"/>
    </location>
</feature>
<feature type="helix" evidence="7">
    <location>
        <begin position="878"/>
        <end position="881"/>
    </location>
</feature>
<feature type="strand" evidence="7">
    <location>
        <begin position="882"/>
        <end position="884"/>
    </location>
</feature>
<feature type="helix" evidence="7">
    <location>
        <begin position="893"/>
        <end position="895"/>
    </location>
</feature>
<feature type="helix" evidence="7">
    <location>
        <begin position="899"/>
        <end position="903"/>
    </location>
</feature>
<feature type="turn" evidence="7">
    <location>
        <begin position="913"/>
        <end position="915"/>
    </location>
</feature>
<feature type="helix" evidence="7">
    <location>
        <begin position="918"/>
        <end position="931"/>
    </location>
</feature>
<feature type="helix" evidence="7">
    <location>
        <begin position="944"/>
        <end position="947"/>
    </location>
</feature>
<feature type="strand" evidence="5">
    <location>
        <begin position="960"/>
        <end position="962"/>
    </location>
</feature>
<feature type="strand" evidence="7">
    <location>
        <begin position="977"/>
        <end position="981"/>
    </location>
</feature>
<feature type="helix" evidence="7">
    <location>
        <begin position="990"/>
        <end position="995"/>
    </location>
</feature>
<feature type="strand" evidence="7">
    <location>
        <begin position="997"/>
        <end position="1002"/>
    </location>
</feature>
<feature type="helix" evidence="7">
    <location>
        <begin position="1017"/>
        <end position="1019"/>
    </location>
</feature>
<feature type="helix" evidence="7">
    <location>
        <begin position="1022"/>
        <end position="1028"/>
    </location>
</feature>
<feature type="helix" evidence="7">
    <location>
        <begin position="1048"/>
        <end position="1061"/>
    </location>
</feature>
<feature type="strand" evidence="7">
    <location>
        <begin position="1065"/>
        <end position="1072"/>
    </location>
</feature>
<feature type="helix" evidence="7">
    <location>
        <begin position="1077"/>
        <end position="1086"/>
    </location>
</feature>
<feature type="strand" evidence="7">
    <location>
        <begin position="1090"/>
        <end position="1095"/>
    </location>
</feature>
<feature type="strand" evidence="7">
    <location>
        <begin position="1102"/>
        <end position="1105"/>
    </location>
</feature>
<feature type="helix" evidence="7">
    <location>
        <begin position="1106"/>
        <end position="1111"/>
    </location>
</feature>
<feature type="helix" evidence="7">
    <location>
        <begin position="1116"/>
        <end position="1129"/>
    </location>
</feature>
<feature type="helix" evidence="7">
    <location>
        <begin position="1133"/>
        <end position="1135"/>
    </location>
</feature>
<feature type="strand" evidence="7">
    <location>
        <begin position="1137"/>
        <end position="1143"/>
    </location>
</feature>
<feature type="helix" evidence="7">
    <location>
        <begin position="1147"/>
        <end position="1155"/>
    </location>
</feature>
<feature type="strand" evidence="7">
    <location>
        <begin position="1159"/>
        <end position="1162"/>
    </location>
</feature>
<feature type="helix" evidence="7">
    <location>
        <begin position="1165"/>
        <end position="1170"/>
    </location>
</feature>
<feature type="helix" evidence="7">
    <location>
        <begin position="1179"/>
        <end position="1181"/>
    </location>
</feature>
<feature type="strand" evidence="7">
    <location>
        <begin position="1187"/>
        <end position="1189"/>
    </location>
</feature>
<feature type="helix" evidence="7">
    <location>
        <begin position="1193"/>
        <end position="1196"/>
    </location>
</feature>
<feature type="helix" evidence="7">
    <location>
        <begin position="1203"/>
        <end position="1224"/>
    </location>
</feature>
<feature type="helix" evidence="7">
    <location>
        <begin position="1229"/>
        <end position="1232"/>
    </location>
</feature>
<feature type="helix" evidence="7">
    <location>
        <begin position="1236"/>
        <end position="1238"/>
    </location>
</feature>
<feature type="strand" evidence="7">
    <location>
        <begin position="1239"/>
        <end position="1241"/>
    </location>
</feature>
<feature type="strand" evidence="7">
    <location>
        <begin position="1248"/>
        <end position="1251"/>
    </location>
</feature>
<feature type="helix" evidence="7">
    <location>
        <begin position="1256"/>
        <end position="1259"/>
    </location>
</feature>
<feature type="helix" evidence="7">
    <location>
        <begin position="1269"/>
        <end position="1271"/>
    </location>
</feature>
<feature type="helix" evidence="7">
    <location>
        <begin position="1283"/>
        <end position="1289"/>
    </location>
</feature>
<feature type="helix" evidence="7">
    <location>
        <begin position="1291"/>
        <end position="1299"/>
    </location>
</feature>
<feature type="strand" evidence="7">
    <location>
        <begin position="1302"/>
        <end position="1309"/>
    </location>
</feature>
<feature type="helix" evidence="7">
    <location>
        <begin position="1318"/>
        <end position="1328"/>
    </location>
</feature>
<feature type="turn" evidence="7">
    <location>
        <begin position="1329"/>
        <end position="1331"/>
    </location>
</feature>
<feature type="strand" evidence="7">
    <location>
        <begin position="1336"/>
        <end position="1345"/>
    </location>
</feature>
<feature type="turn" evidence="7">
    <location>
        <begin position="1347"/>
        <end position="1352"/>
    </location>
</feature>
<feature type="strand" evidence="7">
    <location>
        <begin position="1357"/>
        <end position="1365"/>
    </location>
</feature>
<feature type="turn" evidence="7">
    <location>
        <begin position="1369"/>
        <end position="1372"/>
    </location>
</feature>
<feature type="strand" evidence="7">
    <location>
        <begin position="1375"/>
        <end position="1381"/>
    </location>
</feature>
<feature type="helix" evidence="7">
    <location>
        <begin position="1390"/>
        <end position="1392"/>
    </location>
</feature>
<feature type="turn" evidence="7">
    <location>
        <begin position="1400"/>
        <end position="1403"/>
    </location>
</feature>
<feature type="strand" evidence="7">
    <location>
        <begin position="1408"/>
        <end position="1414"/>
    </location>
</feature>
<feature type="turn" evidence="7">
    <location>
        <begin position="1419"/>
        <end position="1422"/>
    </location>
</feature>
<feature type="strand" evidence="7">
    <location>
        <begin position="1427"/>
        <end position="1431"/>
    </location>
</feature>
<feature type="turn" evidence="7">
    <location>
        <begin position="1437"/>
        <end position="1440"/>
    </location>
</feature>
<feature type="strand" evidence="7">
    <location>
        <begin position="1442"/>
        <end position="1448"/>
    </location>
</feature>
<feature type="strand" evidence="7">
    <location>
        <begin position="1454"/>
        <end position="1456"/>
    </location>
</feature>
<feature type="turn" evidence="7">
    <location>
        <begin position="1457"/>
        <end position="1459"/>
    </location>
</feature>
<feature type="strand" evidence="7">
    <location>
        <begin position="1462"/>
        <end position="1468"/>
    </location>
</feature>
<feature type="strand" evidence="7">
    <location>
        <begin position="1470"/>
        <end position="1472"/>
    </location>
</feature>
<feature type="helix" evidence="7">
    <location>
        <begin position="1474"/>
        <end position="1477"/>
    </location>
</feature>
<feature type="turn" evidence="7">
    <location>
        <begin position="1480"/>
        <end position="1482"/>
    </location>
</feature>
<feature type="strand" evidence="7">
    <location>
        <begin position="1484"/>
        <end position="1486"/>
    </location>
</feature>
<feature type="helix" evidence="7">
    <location>
        <begin position="1491"/>
        <end position="1508"/>
    </location>
</feature>
<feature type="helix" evidence="7">
    <location>
        <begin position="1511"/>
        <end position="1518"/>
    </location>
</feature>
<feature type="helix" evidence="7">
    <location>
        <begin position="1520"/>
        <end position="1524"/>
    </location>
</feature>
<feature type="strand" evidence="7">
    <location>
        <begin position="1527"/>
        <end position="1531"/>
    </location>
</feature>
<feature type="turn" evidence="6">
    <location>
        <begin position="1533"/>
        <end position="1537"/>
    </location>
</feature>
<feature type="turn" evidence="7">
    <location>
        <begin position="1539"/>
        <end position="1541"/>
    </location>
</feature>
<protein>
    <recommendedName>
        <fullName>Ferredoxin-dependent glutamate synthase 2</fullName>
        <ecNumber>1.4.7.1</ecNumber>
    </recommendedName>
    <alternativeName>
        <fullName>FD-GOGAT</fullName>
    </alternativeName>
</protein>